<gene>
    <name evidence="1" type="primary">rlmB</name>
    <name type="ordered locus">RSc1229</name>
    <name type="ORF">RS02736</name>
</gene>
<accession>Q8Y016</accession>
<name>RLMB_RALN1</name>
<keyword id="KW-0963">Cytoplasm</keyword>
<keyword id="KW-0489">Methyltransferase</keyword>
<keyword id="KW-1185">Reference proteome</keyword>
<keyword id="KW-0698">rRNA processing</keyword>
<keyword id="KW-0949">S-adenosyl-L-methionine</keyword>
<keyword id="KW-0808">Transferase</keyword>
<comment type="function">
    <text evidence="1">Specifically methylates the ribose of guanosine 2251 in 23S rRNA.</text>
</comment>
<comment type="catalytic activity">
    <reaction evidence="1">
        <text>guanosine(2251) in 23S rRNA + S-adenosyl-L-methionine = 2'-O-methylguanosine(2251) in 23S rRNA + S-adenosyl-L-homocysteine + H(+)</text>
        <dbReference type="Rhea" id="RHEA:24140"/>
        <dbReference type="Rhea" id="RHEA-COMP:10239"/>
        <dbReference type="Rhea" id="RHEA-COMP:10241"/>
        <dbReference type="ChEBI" id="CHEBI:15378"/>
        <dbReference type="ChEBI" id="CHEBI:57856"/>
        <dbReference type="ChEBI" id="CHEBI:59789"/>
        <dbReference type="ChEBI" id="CHEBI:74269"/>
        <dbReference type="ChEBI" id="CHEBI:74445"/>
        <dbReference type="EC" id="2.1.1.185"/>
    </reaction>
</comment>
<comment type="subcellular location">
    <subcellularLocation>
        <location evidence="1">Cytoplasm</location>
    </subcellularLocation>
</comment>
<comment type="similarity">
    <text evidence="1">Belongs to the class IV-like SAM-binding methyltransferase superfamily. RNA methyltransferase TrmH family. RlmB subfamily.</text>
</comment>
<protein>
    <recommendedName>
        <fullName evidence="1">23S rRNA (guanosine-2'-O-)-methyltransferase RlmB</fullName>
        <ecNumber evidence="1">2.1.1.185</ecNumber>
    </recommendedName>
    <alternativeName>
        <fullName evidence="1">23S rRNA (guanosine2251 2'-O)-methyltransferase</fullName>
    </alternativeName>
    <alternativeName>
        <fullName evidence="1">23S rRNA Gm2251 2'-O-methyltransferase</fullName>
    </alternativeName>
</protein>
<feature type="chain" id="PRO_0000159800" description="23S rRNA (guanosine-2'-O-)-methyltransferase RlmB">
    <location>
        <begin position="1"/>
        <end position="249"/>
    </location>
</feature>
<feature type="binding site" evidence="1">
    <location>
        <position position="197"/>
    </location>
    <ligand>
        <name>S-adenosyl-L-methionine</name>
        <dbReference type="ChEBI" id="CHEBI:59789"/>
    </ligand>
</feature>
<feature type="binding site" evidence="1">
    <location>
        <position position="217"/>
    </location>
    <ligand>
        <name>S-adenosyl-L-methionine</name>
        <dbReference type="ChEBI" id="CHEBI:59789"/>
    </ligand>
</feature>
<feature type="binding site" evidence="1">
    <location>
        <position position="226"/>
    </location>
    <ligand>
        <name>S-adenosyl-L-methionine</name>
        <dbReference type="ChEBI" id="CHEBI:59789"/>
    </ligand>
</feature>
<dbReference type="EC" id="2.1.1.185" evidence="1"/>
<dbReference type="EMBL" id="AL646052">
    <property type="protein sequence ID" value="CAD14931.1"/>
    <property type="molecule type" value="Genomic_DNA"/>
</dbReference>
<dbReference type="RefSeq" id="WP_011001178.1">
    <property type="nucleotide sequence ID" value="NC_003295.1"/>
</dbReference>
<dbReference type="SMR" id="Q8Y016"/>
<dbReference type="STRING" id="267608.RSc1229"/>
<dbReference type="EnsemblBacteria" id="CAD14931">
    <property type="protein sequence ID" value="CAD14931"/>
    <property type="gene ID" value="RSc1229"/>
</dbReference>
<dbReference type="KEGG" id="rso:RSc1229"/>
<dbReference type="eggNOG" id="COG0566">
    <property type="taxonomic scope" value="Bacteria"/>
</dbReference>
<dbReference type="HOGENOM" id="CLU_021322_0_1_4"/>
<dbReference type="Proteomes" id="UP000001436">
    <property type="component" value="Chromosome"/>
</dbReference>
<dbReference type="GO" id="GO:0005829">
    <property type="term" value="C:cytosol"/>
    <property type="evidence" value="ECO:0007669"/>
    <property type="project" value="TreeGrafter"/>
</dbReference>
<dbReference type="GO" id="GO:0003723">
    <property type="term" value="F:RNA binding"/>
    <property type="evidence" value="ECO:0007669"/>
    <property type="project" value="InterPro"/>
</dbReference>
<dbReference type="GO" id="GO:0070039">
    <property type="term" value="F:rRNA (guanosine-2'-O-)-methyltransferase activity"/>
    <property type="evidence" value="ECO:0007669"/>
    <property type="project" value="UniProtKB-UniRule"/>
</dbReference>
<dbReference type="CDD" id="cd18103">
    <property type="entry name" value="SpoU-like_RlmB"/>
    <property type="match status" value="1"/>
</dbReference>
<dbReference type="FunFam" id="3.40.1280.10:FF:000008">
    <property type="entry name" value="Group 3 RNA methyltransferase TrmH"/>
    <property type="match status" value="1"/>
</dbReference>
<dbReference type="Gene3D" id="3.30.1330.30">
    <property type="match status" value="1"/>
</dbReference>
<dbReference type="Gene3D" id="3.40.1280.10">
    <property type="match status" value="1"/>
</dbReference>
<dbReference type="HAMAP" id="MF_01887">
    <property type="entry name" value="23SrRNA_methyltr_B"/>
    <property type="match status" value="1"/>
</dbReference>
<dbReference type="InterPro" id="IPR024915">
    <property type="entry name" value="23S_rRNA_MeTrfase_RlmB"/>
</dbReference>
<dbReference type="InterPro" id="IPR029028">
    <property type="entry name" value="Alpha/beta_knot_MTases"/>
</dbReference>
<dbReference type="InterPro" id="IPR029064">
    <property type="entry name" value="Ribosomal_eL30-like_sf"/>
</dbReference>
<dbReference type="InterPro" id="IPR004441">
    <property type="entry name" value="rRNA_MeTrfase_TrmH"/>
</dbReference>
<dbReference type="InterPro" id="IPR001537">
    <property type="entry name" value="SpoU_MeTrfase"/>
</dbReference>
<dbReference type="InterPro" id="IPR013123">
    <property type="entry name" value="SpoU_subst-bd"/>
</dbReference>
<dbReference type="InterPro" id="IPR029026">
    <property type="entry name" value="tRNA_m1G_MTases_N"/>
</dbReference>
<dbReference type="NCBIfam" id="TIGR00186">
    <property type="entry name" value="rRNA_methyl_3"/>
    <property type="match status" value="1"/>
</dbReference>
<dbReference type="PANTHER" id="PTHR46429">
    <property type="entry name" value="23S RRNA (GUANOSINE-2'-O-)-METHYLTRANSFERASE RLMB"/>
    <property type="match status" value="1"/>
</dbReference>
<dbReference type="PANTHER" id="PTHR46429:SF1">
    <property type="entry name" value="23S RRNA (GUANOSINE-2'-O-)-METHYLTRANSFERASE RLMB"/>
    <property type="match status" value="1"/>
</dbReference>
<dbReference type="Pfam" id="PF00588">
    <property type="entry name" value="SpoU_methylase"/>
    <property type="match status" value="1"/>
</dbReference>
<dbReference type="Pfam" id="PF08032">
    <property type="entry name" value="SpoU_sub_bind"/>
    <property type="match status" value="1"/>
</dbReference>
<dbReference type="SMART" id="SM00967">
    <property type="entry name" value="SpoU_sub_bind"/>
    <property type="match status" value="1"/>
</dbReference>
<dbReference type="SUPFAM" id="SSF75217">
    <property type="entry name" value="alpha/beta knot"/>
    <property type="match status" value="1"/>
</dbReference>
<dbReference type="SUPFAM" id="SSF55315">
    <property type="entry name" value="L30e-like"/>
    <property type="match status" value="1"/>
</dbReference>
<reference key="1">
    <citation type="journal article" date="2002" name="Nature">
        <title>Genome sequence of the plant pathogen Ralstonia solanacearum.</title>
        <authorList>
            <person name="Salanoubat M."/>
            <person name="Genin S."/>
            <person name="Artiguenave F."/>
            <person name="Gouzy J."/>
            <person name="Mangenot S."/>
            <person name="Arlat M."/>
            <person name="Billault A."/>
            <person name="Brottier P."/>
            <person name="Camus J.-C."/>
            <person name="Cattolico L."/>
            <person name="Chandler M."/>
            <person name="Choisne N."/>
            <person name="Claudel-Renard C."/>
            <person name="Cunnac S."/>
            <person name="Demange N."/>
            <person name="Gaspin C."/>
            <person name="Lavie M."/>
            <person name="Moisan A."/>
            <person name="Robert C."/>
            <person name="Saurin W."/>
            <person name="Schiex T."/>
            <person name="Siguier P."/>
            <person name="Thebault P."/>
            <person name="Whalen M."/>
            <person name="Wincker P."/>
            <person name="Levy M."/>
            <person name="Weissenbach J."/>
            <person name="Boucher C.A."/>
        </authorList>
    </citation>
    <scope>NUCLEOTIDE SEQUENCE [LARGE SCALE GENOMIC DNA]</scope>
    <source>
        <strain>ATCC BAA-1114 / GMI1000</strain>
    </source>
</reference>
<proteinExistence type="inferred from homology"/>
<evidence type="ECO:0000255" key="1">
    <source>
        <dbReference type="HAMAP-Rule" id="MF_01887"/>
    </source>
</evidence>
<organism>
    <name type="scientific">Ralstonia nicotianae (strain ATCC BAA-1114 / GMI1000)</name>
    <name type="common">Ralstonia solanacearum</name>
    <dbReference type="NCBI Taxonomy" id="267608"/>
    <lineage>
        <taxon>Bacteria</taxon>
        <taxon>Pseudomonadati</taxon>
        <taxon>Pseudomonadota</taxon>
        <taxon>Betaproteobacteria</taxon>
        <taxon>Burkholderiales</taxon>
        <taxon>Burkholderiaceae</taxon>
        <taxon>Ralstonia</taxon>
        <taxon>Ralstonia solanacearum species complex</taxon>
    </lineage>
</organism>
<sequence length="249" mass="26690">MSKSKLLIGFHAVTARLRHDARSIDEIYFEANRRDRRMQDFLKAAEAAGVRMIPADNERLRGIAGTDRHQGVVAKAEALSLALNLDELLDGIEGPPLLLVLDGVTDPHNLGACLRVADAAGAHAVIAPKDRSVGINTTVAKVASGAAETVPYITVTNLARTLRELQQRGVWVIGTADEAEQDLYRADFKGPIALVMGAEGEGMRRLTRETCDTLVSIPMAGSVESLNVSVASGVCLFEAVRQRSVVPAK</sequence>